<name>PLSX_RHOPA</name>
<gene>
    <name evidence="1" type="primary">plsX</name>
    <name type="ordered locus">RPA2740</name>
</gene>
<keyword id="KW-0963">Cytoplasm</keyword>
<keyword id="KW-0444">Lipid biosynthesis</keyword>
<keyword id="KW-0443">Lipid metabolism</keyword>
<keyword id="KW-0594">Phospholipid biosynthesis</keyword>
<keyword id="KW-1208">Phospholipid metabolism</keyword>
<keyword id="KW-0808">Transferase</keyword>
<accession>Q6N678</accession>
<protein>
    <recommendedName>
        <fullName evidence="1">Phosphate acyltransferase</fullName>
        <ecNumber evidence="1">2.3.1.274</ecNumber>
    </recommendedName>
    <alternativeName>
        <fullName evidence="1">Acyl-ACP phosphotransacylase</fullName>
    </alternativeName>
    <alternativeName>
        <fullName evidence="1">Acyl-[acyl-carrier-protein]--phosphate acyltransferase</fullName>
    </alternativeName>
    <alternativeName>
        <fullName evidence="1">Phosphate-acyl-ACP acyltransferase</fullName>
    </alternativeName>
</protein>
<feature type="chain" id="PRO_0000189929" description="Phosphate acyltransferase">
    <location>
        <begin position="1"/>
        <end position="353"/>
    </location>
</feature>
<reference key="1">
    <citation type="journal article" date="2004" name="Nat. Biotechnol.">
        <title>Complete genome sequence of the metabolically versatile photosynthetic bacterium Rhodopseudomonas palustris.</title>
        <authorList>
            <person name="Larimer F.W."/>
            <person name="Chain P."/>
            <person name="Hauser L."/>
            <person name="Lamerdin J.E."/>
            <person name="Malfatti S."/>
            <person name="Do L."/>
            <person name="Land M.L."/>
            <person name="Pelletier D.A."/>
            <person name="Beatty J.T."/>
            <person name="Lang A.S."/>
            <person name="Tabita F.R."/>
            <person name="Gibson J.L."/>
            <person name="Hanson T.E."/>
            <person name="Bobst C."/>
            <person name="Torres y Torres J.L."/>
            <person name="Peres C."/>
            <person name="Harrison F.H."/>
            <person name="Gibson J."/>
            <person name="Harwood C.S."/>
        </authorList>
    </citation>
    <scope>NUCLEOTIDE SEQUENCE [LARGE SCALE GENOMIC DNA]</scope>
    <source>
        <strain>ATCC BAA-98 / CGA009</strain>
    </source>
</reference>
<proteinExistence type="inferred from homology"/>
<comment type="function">
    <text evidence="1">Catalyzes the reversible formation of acyl-phosphate (acyl-PO(4)) from acyl-[acyl-carrier-protein] (acyl-ACP). This enzyme utilizes acyl-ACP as fatty acyl donor, but not acyl-CoA.</text>
</comment>
<comment type="catalytic activity">
    <reaction evidence="1">
        <text>a fatty acyl-[ACP] + phosphate = an acyl phosphate + holo-[ACP]</text>
        <dbReference type="Rhea" id="RHEA:42292"/>
        <dbReference type="Rhea" id="RHEA-COMP:9685"/>
        <dbReference type="Rhea" id="RHEA-COMP:14125"/>
        <dbReference type="ChEBI" id="CHEBI:43474"/>
        <dbReference type="ChEBI" id="CHEBI:59918"/>
        <dbReference type="ChEBI" id="CHEBI:64479"/>
        <dbReference type="ChEBI" id="CHEBI:138651"/>
        <dbReference type="EC" id="2.3.1.274"/>
    </reaction>
</comment>
<comment type="pathway">
    <text evidence="1">Lipid metabolism; phospholipid metabolism.</text>
</comment>
<comment type="subunit">
    <text evidence="1">Homodimer. Probably interacts with PlsY.</text>
</comment>
<comment type="subcellular location">
    <subcellularLocation>
        <location evidence="1">Cytoplasm</location>
    </subcellularLocation>
    <text evidence="1">Associated with the membrane possibly through PlsY.</text>
</comment>
<comment type="similarity">
    <text evidence="1">Belongs to the PlsX family.</text>
</comment>
<dbReference type="EC" id="2.3.1.274" evidence="1"/>
<dbReference type="EMBL" id="BX572601">
    <property type="protein sequence ID" value="CAE28182.1"/>
    <property type="molecule type" value="Genomic_DNA"/>
</dbReference>
<dbReference type="RefSeq" id="WP_011158291.1">
    <property type="nucleotide sequence ID" value="NZ_CP116810.1"/>
</dbReference>
<dbReference type="SMR" id="Q6N678"/>
<dbReference type="STRING" id="258594.RPA2740"/>
<dbReference type="GeneID" id="66893816"/>
<dbReference type="eggNOG" id="COG0416">
    <property type="taxonomic scope" value="Bacteria"/>
</dbReference>
<dbReference type="HOGENOM" id="CLU_039379_1_0_5"/>
<dbReference type="PhylomeDB" id="Q6N678"/>
<dbReference type="UniPathway" id="UPA00085"/>
<dbReference type="GO" id="GO:0005737">
    <property type="term" value="C:cytoplasm"/>
    <property type="evidence" value="ECO:0007669"/>
    <property type="project" value="UniProtKB-SubCell"/>
</dbReference>
<dbReference type="GO" id="GO:0043811">
    <property type="term" value="F:phosphate:acyl-[acyl carrier protein] acyltransferase activity"/>
    <property type="evidence" value="ECO:0007669"/>
    <property type="project" value="UniProtKB-UniRule"/>
</dbReference>
<dbReference type="GO" id="GO:0006633">
    <property type="term" value="P:fatty acid biosynthetic process"/>
    <property type="evidence" value="ECO:0007669"/>
    <property type="project" value="UniProtKB-UniRule"/>
</dbReference>
<dbReference type="GO" id="GO:0008654">
    <property type="term" value="P:phospholipid biosynthetic process"/>
    <property type="evidence" value="ECO:0007669"/>
    <property type="project" value="UniProtKB-KW"/>
</dbReference>
<dbReference type="Gene3D" id="3.40.718.10">
    <property type="entry name" value="Isopropylmalate Dehydrogenase"/>
    <property type="match status" value="1"/>
</dbReference>
<dbReference type="HAMAP" id="MF_00019">
    <property type="entry name" value="PlsX"/>
    <property type="match status" value="1"/>
</dbReference>
<dbReference type="InterPro" id="IPR003664">
    <property type="entry name" value="FA_synthesis"/>
</dbReference>
<dbReference type="InterPro" id="IPR012281">
    <property type="entry name" value="Phospholipid_synth_PlsX-like"/>
</dbReference>
<dbReference type="NCBIfam" id="TIGR00182">
    <property type="entry name" value="plsX"/>
    <property type="match status" value="1"/>
</dbReference>
<dbReference type="PANTHER" id="PTHR30100">
    <property type="entry name" value="FATTY ACID/PHOSPHOLIPID SYNTHESIS PROTEIN PLSX"/>
    <property type="match status" value="1"/>
</dbReference>
<dbReference type="PANTHER" id="PTHR30100:SF1">
    <property type="entry name" value="PHOSPHATE ACYLTRANSFERASE"/>
    <property type="match status" value="1"/>
</dbReference>
<dbReference type="Pfam" id="PF02504">
    <property type="entry name" value="FA_synthesis"/>
    <property type="match status" value="1"/>
</dbReference>
<dbReference type="PIRSF" id="PIRSF002465">
    <property type="entry name" value="Phsphlp_syn_PlsX"/>
    <property type="match status" value="1"/>
</dbReference>
<dbReference type="SUPFAM" id="SSF53659">
    <property type="entry name" value="Isocitrate/Isopropylmalate dehydrogenase-like"/>
    <property type="match status" value="1"/>
</dbReference>
<sequence>MPQKVRIALDAMGGDFGPSVVIPGAAISLGRHPDVEFLLYGDAKLIEKELAAHPALRKASRVVHTDVAVAMHDKPSVALRRGRYKSSMWQAIDAVKKTEADVTVSAGNTGALMAMARFCLRTLPGIDRPAIAATWPTMRGDSVVLDLGASIGGDAQHLKALAIMGAAMASVLFDLERPTVGLLNIGVEEIKGGEEIREAAELLRAMNSQRFDFIGFVEGDGIGKGAADVIVSEGFAGNIALKAAEGTARQLAEYLRAAMSRTWRSKIGYLFARDAFKALKDKMDPNKSNGGVFLGLNGIVVKSHGGTNAEGFAYAVDVGYDMVRYDLLTKINQTLNRDAGALVATPSAQEVVS</sequence>
<evidence type="ECO:0000255" key="1">
    <source>
        <dbReference type="HAMAP-Rule" id="MF_00019"/>
    </source>
</evidence>
<organism>
    <name type="scientific">Rhodopseudomonas palustris (strain ATCC BAA-98 / CGA009)</name>
    <dbReference type="NCBI Taxonomy" id="258594"/>
    <lineage>
        <taxon>Bacteria</taxon>
        <taxon>Pseudomonadati</taxon>
        <taxon>Pseudomonadota</taxon>
        <taxon>Alphaproteobacteria</taxon>
        <taxon>Hyphomicrobiales</taxon>
        <taxon>Nitrobacteraceae</taxon>
        <taxon>Rhodopseudomonas</taxon>
    </lineage>
</organism>